<comment type="function">
    <text evidence="1">Core subunit of the mitochondrial membrane respiratory chain NADH dehydrogenase (Complex I) that is believed to belong to the minimal assembly required for catalysis. Complex I functions in the transfer of electrons from NADH to the respiratory chain. The immediate electron acceptor for the enzyme is believed to be ubiquinone (By similarity).</text>
</comment>
<comment type="catalytic activity">
    <reaction>
        <text>a ubiquinone + NADH + 5 H(+)(in) = a ubiquinol + NAD(+) + 4 H(+)(out)</text>
        <dbReference type="Rhea" id="RHEA:29091"/>
        <dbReference type="Rhea" id="RHEA-COMP:9565"/>
        <dbReference type="Rhea" id="RHEA-COMP:9566"/>
        <dbReference type="ChEBI" id="CHEBI:15378"/>
        <dbReference type="ChEBI" id="CHEBI:16389"/>
        <dbReference type="ChEBI" id="CHEBI:17976"/>
        <dbReference type="ChEBI" id="CHEBI:57540"/>
        <dbReference type="ChEBI" id="CHEBI:57945"/>
        <dbReference type="EC" id="7.1.1.2"/>
    </reaction>
</comment>
<comment type="subcellular location">
    <subcellularLocation>
        <location evidence="1">Mitochondrion inner membrane</location>
        <topology evidence="1">Multi-pass membrane protein</topology>
    </subcellularLocation>
</comment>
<comment type="similarity">
    <text evidence="5">Belongs to the complex I subunit 1 family.</text>
</comment>
<comment type="sequence caution" evidence="5">
    <conflict type="erroneous initiation">
        <sequence resource="EMBL-CDS" id="AAO13509"/>
    </conflict>
</comment>
<name>NU1M_CAEBR</name>
<reference key="1">
    <citation type="journal article" date="2003" name="Mol. Biol. Evol.">
        <title>Phylogenetics in Caenorhabditis elegans: an analysis of divergence and outcrossing.</title>
        <authorList>
            <person name="Denver D.R."/>
            <person name="Morris K."/>
            <person name="Thomas W.K."/>
        </authorList>
    </citation>
    <scope>NUCLEOTIDE SEQUENCE [GENOMIC DNA]</scope>
    <scope>VARIANTS ILE-175 AND VAL-244</scope>
    <source>
        <strain>PB800</strain>
    </source>
</reference>
<reference key="2">
    <citation type="journal article" date="2008" name="BMC Evol. Biol.">
        <title>Muller's Ratchet and compensatory mutation in Caenorhabditis briggsae mitochondrial genome evolution.</title>
        <authorList>
            <person name="Howe D.K."/>
            <person name="Denver D.R."/>
        </authorList>
    </citation>
    <scope>NUCLEOTIDE SEQUENCE [GENOMIC DNA]</scope>
    <scope>VARIANTS SER-39; SER-67; ILE-90; ASP-101; VAL-123; ILE-175; VAL-243; ALA-244; VAL-244; MET-247 AND MET-250</scope>
    <source>
        <strain>BW287</strain>
        <strain>ED3032</strain>
        <strain>ED3033</strain>
        <strain>ED3034</strain>
        <strain>ED3035</strain>
        <strain>ED3036</strain>
        <strain>ED3037</strain>
        <strain>ED3083</strain>
        <strain>ED3092</strain>
        <strain>ED3101</strain>
        <strain>EG4181</strain>
        <strain>EG4207A</strain>
        <strain>HK104</strain>
        <strain>HK105</strain>
        <strain>JU403</strain>
        <strain>JU439</strain>
        <strain>JU516</strain>
        <strain>JU725</strain>
        <strain>JU726</strain>
        <strain>JU793</strain>
        <strain>PB800</strain>
        <strain>PB826</strain>
        <strain>VT847</strain>
    </source>
</reference>
<reference key="3">
    <citation type="journal article" date="2003" name="PLoS Biol.">
        <title>The genome sequence of Caenorhabditis briggsae: a platform for comparative genomics.</title>
        <authorList>
            <person name="Stein L.D."/>
            <person name="Bao Z."/>
            <person name="Blasiar D."/>
            <person name="Blumenthal T."/>
            <person name="Brent M.R."/>
            <person name="Chen N."/>
            <person name="Chinwalla A."/>
            <person name="Clarke L."/>
            <person name="Clee C."/>
            <person name="Coghlan A."/>
            <person name="Coulson A."/>
            <person name="D'Eustachio P."/>
            <person name="Fitch D.H.A."/>
            <person name="Fulton L.A."/>
            <person name="Fulton R.E."/>
            <person name="Griffiths-Jones S."/>
            <person name="Harris T.W."/>
            <person name="Hillier L.W."/>
            <person name="Kamath R."/>
            <person name="Kuwabara P.E."/>
            <person name="Mardis E.R."/>
            <person name="Marra M.A."/>
            <person name="Miner T.L."/>
            <person name="Minx P."/>
            <person name="Mullikin J.C."/>
            <person name="Plumb R.W."/>
            <person name="Rogers J."/>
            <person name="Schein J.E."/>
            <person name="Sohrmann M."/>
            <person name="Spieth J."/>
            <person name="Stajich J.E."/>
            <person name="Wei C."/>
            <person name="Willey D."/>
            <person name="Wilson R.K."/>
            <person name="Durbin R.M."/>
            <person name="Waterston R.H."/>
        </authorList>
    </citation>
    <scope>NUCLEOTIDE SEQUENCE [LARGE SCALE GENOMIC DNA]</scope>
    <source>
        <strain>AF16</strain>
    </source>
</reference>
<feature type="chain" id="PRO_0000117360" description="NADH-ubiquinone oxidoreductase chain 1">
    <location>
        <begin position="1"/>
        <end position="291"/>
    </location>
</feature>
<feature type="transmembrane region" description="Helical" evidence="2">
    <location>
        <begin position="2"/>
        <end position="22"/>
    </location>
</feature>
<feature type="transmembrane region" description="Helical" evidence="2">
    <location>
        <begin position="71"/>
        <end position="91"/>
    </location>
</feature>
<feature type="transmembrane region" description="Helical" evidence="2">
    <location>
        <begin position="104"/>
        <end position="124"/>
    </location>
</feature>
<feature type="transmembrane region" description="Helical" evidence="2">
    <location>
        <begin position="142"/>
        <end position="162"/>
    </location>
</feature>
<feature type="transmembrane region" description="Helical" evidence="2">
    <location>
        <begin position="164"/>
        <end position="184"/>
    </location>
</feature>
<feature type="transmembrane region" description="Helical" evidence="2">
    <location>
        <begin position="211"/>
        <end position="231"/>
    </location>
</feature>
<feature type="transmembrane region" description="Helical" evidence="2">
    <location>
        <begin position="234"/>
        <end position="254"/>
    </location>
</feature>
<feature type="transmembrane region" description="Helical" evidence="2">
    <location>
        <begin position="269"/>
        <end position="289"/>
    </location>
</feature>
<feature type="sequence variant" description="In strain: VT847." evidence="4">
    <original>P</original>
    <variation>S</variation>
    <location>
        <position position="39"/>
    </location>
</feature>
<feature type="sequence variant" description="In strain: VT847." evidence="4">
    <original>N</original>
    <variation>S</variation>
    <location>
        <position position="67"/>
    </location>
</feature>
<feature type="sequence variant" description="In strain: JU403, JU439, JU516 and JU793." evidence="4">
    <original>T</original>
    <variation>I</variation>
    <location>
        <position position="90"/>
    </location>
</feature>
<feature type="sequence variant" description="In strain: ED3036." evidence="4">
    <original>E</original>
    <variation>D</variation>
    <location>
        <position position="101"/>
    </location>
</feature>
<feature type="sequence variant" description="In strain: BW287." evidence="4">
    <original>I</original>
    <variation>V</variation>
    <location>
        <position position="123"/>
    </location>
</feature>
<feature type="sequence variant" description="In strain: BW287, ED3033, ED3034, ED3035, ED3037, ED3092, ED3101, EG4181, EG4207A, HK104, HK105, JU403, JU439, JU516, JU725, JU793, PB800, PB826 and VT847." evidence="3 4">
    <original>V</original>
    <variation>I</variation>
    <location>
        <position position="175"/>
    </location>
</feature>
<feature type="sequence variant" description="In strain: ED3033, ED3034, ED3035 and ED3037." evidence="4">
    <original>A</original>
    <variation>V</variation>
    <location>
        <position position="243"/>
    </location>
</feature>
<feature type="sequence variant" description="In strain: BW287, ED3033, ED3034, ED3035, ED3037, ED3092, ED3101, HK104, HK105, JU403, JU439, JU516, JU793, PB826 and VT847." evidence="4">
    <original>S</original>
    <variation>A</variation>
    <location>
        <position position="244"/>
    </location>
</feature>
<feature type="sequence variant" description="In strain: EG4181, EG4207A and PB800." evidence="3 4">
    <original>S</original>
    <variation>V</variation>
    <location>
        <position position="244"/>
    </location>
</feature>
<feature type="sequence variant" description="In strain: ED3092 and ED3101." evidence="4">
    <original>I</original>
    <variation>M</variation>
    <location>
        <position position="247"/>
    </location>
</feature>
<feature type="sequence variant" description="In strain: JU793." evidence="4">
    <original>I</original>
    <variation>M</variation>
    <location>
        <position position="250"/>
    </location>
</feature>
<feature type="sequence conflict" description="In Ref. 2; ACB06102/ACB06114/ACB06126/ACB06138/ACB06150/ACB06162/ACB06174/ACB06186/ACB06198/ACB06210/ACB06222/ACB06234/ACB06246/ACB06258/ACB06270/ACB06282/ACB06294/ACB06306/ACB06318/ACB06330/ACB06366/ACB06342/ACB06354." evidence="5" ref="2">
    <original>C</original>
    <variation>Y</variation>
    <location>
        <position position="166"/>
    </location>
</feature>
<geneLocation type="mitochondrion"/>
<dbReference type="EC" id="7.1.1.2"/>
<dbReference type="EMBL" id="AY171102">
    <property type="protein sequence ID" value="AAO13509.1"/>
    <property type="status" value="ALT_INIT"/>
    <property type="molecule type" value="Genomic_DNA"/>
</dbReference>
<dbReference type="EMBL" id="AY171101">
    <property type="protein sequence ID" value="AAO13507.1"/>
    <property type="molecule type" value="Genomic_DNA"/>
</dbReference>
<dbReference type="EMBL" id="EU407781">
    <property type="protein sequence ID" value="ACB06102.1"/>
    <property type="molecule type" value="Genomic_DNA"/>
</dbReference>
<dbReference type="EMBL" id="EU407782">
    <property type="protein sequence ID" value="ACB06114.1"/>
    <property type="molecule type" value="Genomic_DNA"/>
</dbReference>
<dbReference type="EMBL" id="EU407783">
    <property type="protein sequence ID" value="ACB06126.1"/>
    <property type="molecule type" value="Genomic_DNA"/>
</dbReference>
<dbReference type="EMBL" id="EU407784">
    <property type="protein sequence ID" value="ACB06138.1"/>
    <property type="molecule type" value="Genomic_DNA"/>
</dbReference>
<dbReference type="EMBL" id="EU407785">
    <property type="protein sequence ID" value="ACB06150.1"/>
    <property type="molecule type" value="Genomic_DNA"/>
</dbReference>
<dbReference type="EMBL" id="EU407786">
    <property type="protein sequence ID" value="ACB06162.1"/>
    <property type="molecule type" value="Genomic_DNA"/>
</dbReference>
<dbReference type="EMBL" id="EU407787">
    <property type="protein sequence ID" value="ACB06174.1"/>
    <property type="molecule type" value="Genomic_DNA"/>
</dbReference>
<dbReference type="EMBL" id="EU407788">
    <property type="protein sequence ID" value="ACB06186.1"/>
    <property type="molecule type" value="Genomic_DNA"/>
</dbReference>
<dbReference type="EMBL" id="EU407789">
    <property type="protein sequence ID" value="ACB06198.1"/>
    <property type="molecule type" value="Genomic_DNA"/>
</dbReference>
<dbReference type="EMBL" id="EU407790">
    <property type="protein sequence ID" value="ACB06210.1"/>
    <property type="molecule type" value="Genomic_DNA"/>
</dbReference>
<dbReference type="EMBL" id="EU407791">
    <property type="protein sequence ID" value="ACB06222.1"/>
    <property type="molecule type" value="Genomic_DNA"/>
</dbReference>
<dbReference type="EMBL" id="EU407792">
    <property type="protein sequence ID" value="ACB06234.1"/>
    <property type="molecule type" value="Genomic_DNA"/>
</dbReference>
<dbReference type="EMBL" id="EU407793">
    <property type="protein sequence ID" value="ACB06246.1"/>
    <property type="molecule type" value="Genomic_DNA"/>
</dbReference>
<dbReference type="EMBL" id="EU407794">
    <property type="protein sequence ID" value="ACB06258.1"/>
    <property type="molecule type" value="Genomic_DNA"/>
</dbReference>
<dbReference type="EMBL" id="EU407795">
    <property type="protein sequence ID" value="ACB06270.1"/>
    <property type="molecule type" value="Genomic_DNA"/>
</dbReference>
<dbReference type="EMBL" id="EU407796">
    <property type="protein sequence ID" value="ACB06282.1"/>
    <property type="molecule type" value="Genomic_DNA"/>
</dbReference>
<dbReference type="EMBL" id="EU407797">
    <property type="protein sequence ID" value="ACB06294.1"/>
    <property type="molecule type" value="Genomic_DNA"/>
</dbReference>
<dbReference type="EMBL" id="EU407798">
    <property type="protein sequence ID" value="ACB06306.1"/>
    <property type="molecule type" value="Genomic_DNA"/>
</dbReference>
<dbReference type="EMBL" id="EU407799">
    <property type="protein sequence ID" value="ACB06318.1"/>
    <property type="molecule type" value="Genomic_DNA"/>
</dbReference>
<dbReference type="EMBL" id="EU407800">
    <property type="protein sequence ID" value="ACB06330.1"/>
    <property type="molecule type" value="Genomic_DNA"/>
</dbReference>
<dbReference type="EMBL" id="EU407801">
    <property type="protein sequence ID" value="ACB06342.1"/>
    <property type="molecule type" value="Genomic_DNA"/>
</dbReference>
<dbReference type="EMBL" id="EU407802">
    <property type="protein sequence ID" value="ACB06354.1"/>
    <property type="molecule type" value="Genomic_DNA"/>
</dbReference>
<dbReference type="EMBL" id="EU407803">
    <property type="protein sequence ID" value="ACB06366.1"/>
    <property type="molecule type" value="Genomic_DNA"/>
</dbReference>
<dbReference type="EMBL" id="AC186293">
    <property type="status" value="NOT_ANNOTATED_CDS"/>
    <property type="molecule type" value="Genomic_DNA"/>
</dbReference>
<dbReference type="RefSeq" id="YP_001504337.1">
    <property type="nucleotide sequence ID" value="NC_009885.1"/>
</dbReference>
<dbReference type="SMR" id="Q8HEC4"/>
<dbReference type="FunCoup" id="Q8HEC4">
    <property type="interactions" value="82"/>
</dbReference>
<dbReference type="STRING" id="6238.Q8HEC4"/>
<dbReference type="GeneID" id="5666627"/>
<dbReference type="KEGG" id="cbr:ND1"/>
<dbReference type="CTD" id="4535"/>
<dbReference type="InParanoid" id="Q8HEC4"/>
<dbReference type="Proteomes" id="UP000008549">
    <property type="component" value="Mitochondrion"/>
</dbReference>
<dbReference type="GO" id="GO:0005743">
    <property type="term" value="C:mitochondrial inner membrane"/>
    <property type="evidence" value="ECO:0007669"/>
    <property type="project" value="UniProtKB-SubCell"/>
</dbReference>
<dbReference type="GO" id="GO:0045271">
    <property type="term" value="C:respiratory chain complex I"/>
    <property type="evidence" value="ECO:0000318"/>
    <property type="project" value="GO_Central"/>
</dbReference>
<dbReference type="GO" id="GO:0008137">
    <property type="term" value="F:NADH dehydrogenase (ubiquinone) activity"/>
    <property type="evidence" value="ECO:0007669"/>
    <property type="project" value="UniProtKB-EC"/>
</dbReference>
<dbReference type="GO" id="GO:0009060">
    <property type="term" value="P:aerobic respiration"/>
    <property type="evidence" value="ECO:0000318"/>
    <property type="project" value="GO_Central"/>
</dbReference>
<dbReference type="InterPro" id="IPR001694">
    <property type="entry name" value="NADH_UbQ_OxRdtase_su1/FPO"/>
</dbReference>
<dbReference type="InterPro" id="IPR018086">
    <property type="entry name" value="NADH_UbQ_OxRdtase_su1_CS"/>
</dbReference>
<dbReference type="PANTHER" id="PTHR11432">
    <property type="entry name" value="NADH DEHYDROGENASE SUBUNIT 1"/>
    <property type="match status" value="1"/>
</dbReference>
<dbReference type="PANTHER" id="PTHR11432:SF3">
    <property type="entry name" value="NADH-UBIQUINONE OXIDOREDUCTASE CHAIN 1"/>
    <property type="match status" value="1"/>
</dbReference>
<dbReference type="Pfam" id="PF00146">
    <property type="entry name" value="NADHdh"/>
    <property type="match status" value="1"/>
</dbReference>
<dbReference type="PROSITE" id="PS00667">
    <property type="entry name" value="COMPLEX1_ND1_1"/>
    <property type="match status" value="1"/>
</dbReference>
<dbReference type="PROSITE" id="PS00668">
    <property type="entry name" value="COMPLEX1_ND1_2"/>
    <property type="match status" value="1"/>
</dbReference>
<evidence type="ECO:0000250" key="1"/>
<evidence type="ECO:0000255" key="2"/>
<evidence type="ECO:0000269" key="3">
    <source>
    </source>
</evidence>
<evidence type="ECO:0000269" key="4">
    <source>
    </source>
</evidence>
<evidence type="ECO:0000305" key="5"/>
<sequence>MILVLIMVILMMIFIVQSIAFITLYERHLLGSSQNRLGPTKVTFMGLAQALLDGVKLLKKEQMTPLNSSEVSFLLVPGISFIVMYLEWFTLPYFFDFISFEYSVLFFLCLIGFSVYTTLVSGIVSKSKYGMIGAIRASSQSISYEIAFSLYVLCIIIHNNVFNFMCKFNLSLLIVYIPFLIMIIAELNRAPFDFSEGESELVSGYNVEFASVAFVLLFLSEYGSLIFFSVLSSAMFFSFSILASFSIFSILIFIRSSYPRYRYDLMMSLFWFKLLPVSLIMLCFYAVVFYY</sequence>
<proteinExistence type="inferred from homology"/>
<organism>
    <name type="scientific">Caenorhabditis briggsae</name>
    <dbReference type="NCBI Taxonomy" id="6238"/>
    <lineage>
        <taxon>Eukaryota</taxon>
        <taxon>Metazoa</taxon>
        <taxon>Ecdysozoa</taxon>
        <taxon>Nematoda</taxon>
        <taxon>Chromadorea</taxon>
        <taxon>Rhabditida</taxon>
        <taxon>Rhabditina</taxon>
        <taxon>Rhabditomorpha</taxon>
        <taxon>Rhabditoidea</taxon>
        <taxon>Rhabditidae</taxon>
        <taxon>Peloderinae</taxon>
        <taxon>Caenorhabditis</taxon>
    </lineage>
</organism>
<accession>Q8HEC4</accession>
<accession>B1PE35</accession>
<accession>B1PE47</accession>
<accession>B1PE59</accession>
<accession>B1PE95</accession>
<accession>B1PED1</accession>
<accession>B1PEF5</accession>
<accession>B1PEH9</accession>
<accession>B1PEK3</accession>
<accession>B1PEL5</accession>
<accession>B1PEN9</accession>
<accession>B1PER3</accession>
<accession>B1PEU9</accession>
<accession>Q8HEC6</accession>
<keyword id="KW-0249">Electron transport</keyword>
<keyword id="KW-0472">Membrane</keyword>
<keyword id="KW-0496">Mitochondrion</keyword>
<keyword id="KW-0999">Mitochondrion inner membrane</keyword>
<keyword id="KW-0520">NAD</keyword>
<keyword id="KW-1185">Reference proteome</keyword>
<keyword id="KW-0679">Respiratory chain</keyword>
<keyword id="KW-1278">Translocase</keyword>
<keyword id="KW-0812">Transmembrane</keyword>
<keyword id="KW-1133">Transmembrane helix</keyword>
<keyword id="KW-0813">Transport</keyword>
<keyword id="KW-0830">Ubiquinone</keyword>
<gene>
    <name type="primary">nd1</name>
</gene>
<protein>
    <recommendedName>
        <fullName>NADH-ubiquinone oxidoreductase chain 1</fullName>
        <ecNumber>7.1.1.2</ecNumber>
    </recommendedName>
    <alternativeName>
        <fullName>NADH dehydrogenase subunit 1</fullName>
    </alternativeName>
</protein>